<comment type="function">
    <text evidence="1">F(1)F(0) ATP synthase produces ATP from ADP in the presence of a proton or sodium gradient. F-type ATPases consist of two structural domains, F(1) containing the extramembraneous catalytic core and F(0) containing the membrane proton channel, linked together by a central stalk and a peripheral stalk. During catalysis, ATP synthesis in the catalytic domain of F(1) is coupled via a rotary mechanism of the central stalk subunits to proton translocation.</text>
</comment>
<comment type="function">
    <text evidence="1">Key component of the F(0) channel; it plays a direct role in translocation across the membrane. A homomeric c-ring of between 10-14 subunits forms the central stalk rotor element with the F(1) delta and epsilon subunits.</text>
</comment>
<comment type="subunit">
    <text evidence="1">F-type ATPases have 2 components, F(1) - the catalytic core - and F(0) - the membrane proton channel. F(1) has five subunits: alpha(3), beta(3), gamma(1), delta(1), epsilon(1). F(0) has four main subunits: a(1), b(1), b'(1) and c(10-14). The alpha and beta chains form an alternating ring which encloses part of the gamma chain. F(1) is attached to F(0) by a central stalk formed by the gamma and epsilon chains, while a peripheral stalk is formed by the delta, b and b' chains.</text>
</comment>
<comment type="subcellular location">
    <subcellularLocation>
        <location evidence="1">Plastid</location>
        <location evidence="1">Chloroplast thylakoid membrane</location>
        <topology evidence="1">Multi-pass membrane protein</topology>
    </subcellularLocation>
</comment>
<comment type="miscellaneous">
    <text>In plastids the F-type ATPase is also known as CF(1)CF(0).</text>
</comment>
<comment type="similarity">
    <text evidence="1">Belongs to the ATPase C chain family.</text>
</comment>
<keyword id="KW-0066">ATP synthesis</keyword>
<keyword id="KW-0138">CF(0)</keyword>
<keyword id="KW-0150">Chloroplast</keyword>
<keyword id="KW-0375">Hydrogen ion transport</keyword>
<keyword id="KW-0406">Ion transport</keyword>
<keyword id="KW-0446">Lipid-binding</keyword>
<keyword id="KW-0472">Membrane</keyword>
<keyword id="KW-0934">Plastid</keyword>
<keyword id="KW-0793">Thylakoid</keyword>
<keyword id="KW-0812">Transmembrane</keyword>
<keyword id="KW-1133">Transmembrane helix</keyword>
<keyword id="KW-0813">Transport</keyword>
<gene>
    <name evidence="1" type="primary">atpH</name>
</gene>
<reference key="1">
    <citation type="submission" date="2003-02" db="EMBL/GenBank/DDBJ databases">
        <title>Complete nucleotide sequence of Pinus koraiensis.</title>
        <authorList>
            <person name="Noh E.W."/>
            <person name="Lee J.S."/>
            <person name="Choi Y.I."/>
            <person name="Han M.S."/>
            <person name="Yi Y.S."/>
            <person name="Han S.U."/>
        </authorList>
    </citation>
    <scope>NUCLEOTIDE SEQUENCE [LARGE SCALE GENOMIC DNA]</scope>
    <source>
        <strain>KangWon16</strain>
    </source>
</reference>
<geneLocation type="chloroplast"/>
<dbReference type="EMBL" id="AY228468">
    <property type="protein sequence ID" value="AAO73996.1"/>
    <property type="molecule type" value="Genomic_DNA"/>
</dbReference>
<dbReference type="RefSeq" id="NP_817149.1">
    <property type="nucleotide sequence ID" value="NC_004677.2"/>
</dbReference>
<dbReference type="SMR" id="Q7GUD2"/>
<dbReference type="GeneID" id="806907"/>
<dbReference type="GO" id="GO:0009535">
    <property type="term" value="C:chloroplast thylakoid membrane"/>
    <property type="evidence" value="ECO:0007669"/>
    <property type="project" value="UniProtKB-SubCell"/>
</dbReference>
<dbReference type="GO" id="GO:0045259">
    <property type="term" value="C:proton-transporting ATP synthase complex"/>
    <property type="evidence" value="ECO:0007669"/>
    <property type="project" value="UniProtKB-KW"/>
</dbReference>
<dbReference type="GO" id="GO:0033177">
    <property type="term" value="C:proton-transporting two-sector ATPase complex, proton-transporting domain"/>
    <property type="evidence" value="ECO:0007669"/>
    <property type="project" value="InterPro"/>
</dbReference>
<dbReference type="GO" id="GO:0008289">
    <property type="term" value="F:lipid binding"/>
    <property type="evidence" value="ECO:0007669"/>
    <property type="project" value="UniProtKB-KW"/>
</dbReference>
<dbReference type="GO" id="GO:0046933">
    <property type="term" value="F:proton-transporting ATP synthase activity, rotational mechanism"/>
    <property type="evidence" value="ECO:0007669"/>
    <property type="project" value="UniProtKB-UniRule"/>
</dbReference>
<dbReference type="CDD" id="cd18183">
    <property type="entry name" value="ATP-synt_Fo_c_ATPH"/>
    <property type="match status" value="1"/>
</dbReference>
<dbReference type="FunFam" id="1.20.20.10:FF:000001">
    <property type="entry name" value="ATP synthase subunit c, chloroplastic"/>
    <property type="match status" value="1"/>
</dbReference>
<dbReference type="Gene3D" id="1.20.20.10">
    <property type="entry name" value="F1F0 ATP synthase subunit C"/>
    <property type="match status" value="1"/>
</dbReference>
<dbReference type="HAMAP" id="MF_01396">
    <property type="entry name" value="ATP_synth_c_bact"/>
    <property type="match status" value="1"/>
</dbReference>
<dbReference type="InterPro" id="IPR005953">
    <property type="entry name" value="ATP_synth_csu_bac/chlpt"/>
</dbReference>
<dbReference type="InterPro" id="IPR000454">
    <property type="entry name" value="ATP_synth_F0_csu"/>
</dbReference>
<dbReference type="InterPro" id="IPR020537">
    <property type="entry name" value="ATP_synth_F0_csu_DDCD_BS"/>
</dbReference>
<dbReference type="InterPro" id="IPR038662">
    <property type="entry name" value="ATP_synth_F0_csu_sf"/>
</dbReference>
<dbReference type="InterPro" id="IPR002379">
    <property type="entry name" value="ATPase_proteolipid_c-like_dom"/>
</dbReference>
<dbReference type="InterPro" id="IPR035921">
    <property type="entry name" value="F/V-ATP_Csub_sf"/>
</dbReference>
<dbReference type="NCBIfam" id="TIGR01260">
    <property type="entry name" value="ATP_synt_c"/>
    <property type="match status" value="1"/>
</dbReference>
<dbReference type="NCBIfam" id="NF005608">
    <property type="entry name" value="PRK07354.1"/>
    <property type="match status" value="1"/>
</dbReference>
<dbReference type="PANTHER" id="PTHR10031">
    <property type="entry name" value="ATP SYNTHASE LIPID-BINDING PROTEIN, MITOCHONDRIAL"/>
    <property type="match status" value="1"/>
</dbReference>
<dbReference type="PANTHER" id="PTHR10031:SF48">
    <property type="entry name" value="ATP SYNTHASE SUBUNIT C, CHLOROPLASTIC"/>
    <property type="match status" value="1"/>
</dbReference>
<dbReference type="Pfam" id="PF00137">
    <property type="entry name" value="ATP-synt_C"/>
    <property type="match status" value="1"/>
</dbReference>
<dbReference type="PRINTS" id="PR00124">
    <property type="entry name" value="ATPASEC"/>
</dbReference>
<dbReference type="SUPFAM" id="SSF81333">
    <property type="entry name" value="F1F0 ATP synthase subunit C"/>
    <property type="match status" value="1"/>
</dbReference>
<dbReference type="PROSITE" id="PS00605">
    <property type="entry name" value="ATPASE_C"/>
    <property type="match status" value="1"/>
</dbReference>
<accession>Q7GUD2</accession>
<organism>
    <name type="scientific">Pinus koraiensis</name>
    <name type="common">Korean pine</name>
    <dbReference type="NCBI Taxonomy" id="88728"/>
    <lineage>
        <taxon>Eukaryota</taxon>
        <taxon>Viridiplantae</taxon>
        <taxon>Streptophyta</taxon>
        <taxon>Embryophyta</taxon>
        <taxon>Tracheophyta</taxon>
        <taxon>Spermatophyta</taxon>
        <taxon>Pinopsida</taxon>
        <taxon>Pinidae</taxon>
        <taxon>Conifers I</taxon>
        <taxon>Pinales</taxon>
        <taxon>Pinaceae</taxon>
        <taxon>Pinus</taxon>
        <taxon>Pinus subgen. Strobus</taxon>
    </lineage>
</organism>
<feature type="chain" id="PRO_0000277433" description="ATP synthase subunit c, chloroplastic">
    <location>
        <begin position="1"/>
        <end position="81"/>
    </location>
</feature>
<feature type="transmembrane region" description="Helical" evidence="1">
    <location>
        <begin position="3"/>
        <end position="23"/>
    </location>
</feature>
<feature type="transmembrane region" description="Helical" evidence="1">
    <location>
        <begin position="57"/>
        <end position="77"/>
    </location>
</feature>
<feature type="site" description="Reversibly protonated during proton transport" evidence="1">
    <location>
        <position position="61"/>
    </location>
</feature>
<evidence type="ECO:0000255" key="1">
    <source>
        <dbReference type="HAMAP-Rule" id="MF_01396"/>
    </source>
</evidence>
<sequence>MDPLISAASVIAAGLSVGLASIGPGVGQGTAAGQAVEGIARQPEAEGKIRGTLLLSLAFMEALTIYGLVVALALLFANPFV</sequence>
<protein>
    <recommendedName>
        <fullName evidence="1">ATP synthase subunit c, chloroplastic</fullName>
    </recommendedName>
    <alternativeName>
        <fullName evidence="1">ATP synthase F(0) sector subunit c</fullName>
    </alternativeName>
    <alternativeName>
        <fullName evidence="1">ATPase subunit III</fullName>
    </alternativeName>
    <alternativeName>
        <fullName evidence="1">F-type ATPase subunit c</fullName>
        <shortName evidence="1">F-ATPase subunit c</shortName>
    </alternativeName>
    <alternativeName>
        <fullName evidence="1">Lipid-binding protein</fullName>
    </alternativeName>
</protein>
<proteinExistence type="inferred from homology"/>
<name>ATPH_PINKO</name>